<proteinExistence type="inferred from homology"/>
<comment type="function">
    <text evidence="1">Catalyzes the transfer of a phosphate group to glutamate to form L-glutamate 5-phosphate.</text>
</comment>
<comment type="catalytic activity">
    <reaction evidence="1">
        <text>L-glutamate + ATP = L-glutamyl 5-phosphate + ADP</text>
        <dbReference type="Rhea" id="RHEA:14877"/>
        <dbReference type="ChEBI" id="CHEBI:29985"/>
        <dbReference type="ChEBI" id="CHEBI:30616"/>
        <dbReference type="ChEBI" id="CHEBI:58274"/>
        <dbReference type="ChEBI" id="CHEBI:456216"/>
        <dbReference type="EC" id="2.7.2.11"/>
    </reaction>
</comment>
<comment type="pathway">
    <text evidence="1">Amino-acid biosynthesis; L-proline biosynthesis; L-glutamate 5-semialdehyde from L-glutamate: step 1/2.</text>
</comment>
<comment type="subcellular location">
    <subcellularLocation>
        <location evidence="1">Cytoplasm</location>
    </subcellularLocation>
</comment>
<comment type="similarity">
    <text evidence="1">Belongs to the glutamate 5-kinase family.</text>
</comment>
<reference key="1">
    <citation type="journal article" date="2000" name="Nature">
        <title>Complete DNA sequence of a serogroup A strain of Neisseria meningitidis Z2491.</title>
        <authorList>
            <person name="Parkhill J."/>
            <person name="Achtman M."/>
            <person name="James K.D."/>
            <person name="Bentley S.D."/>
            <person name="Churcher C.M."/>
            <person name="Klee S.R."/>
            <person name="Morelli G."/>
            <person name="Basham D."/>
            <person name="Brown D."/>
            <person name="Chillingworth T."/>
            <person name="Davies R.M."/>
            <person name="Davis P."/>
            <person name="Devlin K."/>
            <person name="Feltwell T."/>
            <person name="Hamlin N."/>
            <person name="Holroyd S."/>
            <person name="Jagels K."/>
            <person name="Leather S."/>
            <person name="Moule S."/>
            <person name="Mungall K.L."/>
            <person name="Quail M.A."/>
            <person name="Rajandream M.A."/>
            <person name="Rutherford K.M."/>
            <person name="Simmonds M."/>
            <person name="Skelton J."/>
            <person name="Whitehead S."/>
            <person name="Spratt B.G."/>
            <person name="Barrell B.G."/>
        </authorList>
    </citation>
    <scope>NUCLEOTIDE SEQUENCE [LARGE SCALE GENOMIC DNA]</scope>
    <source>
        <strain>DSM 15465 / Z2491</strain>
    </source>
</reference>
<name>PROB_NEIMA</name>
<dbReference type="EC" id="2.7.2.11" evidence="1"/>
<dbReference type="EMBL" id="AL157959">
    <property type="protein sequence ID" value="CAM08456.1"/>
    <property type="molecule type" value="Genomic_DNA"/>
</dbReference>
<dbReference type="PIR" id="B81895">
    <property type="entry name" value="B81895"/>
</dbReference>
<dbReference type="RefSeq" id="WP_002219332.1">
    <property type="nucleotide sequence ID" value="NC_003116.1"/>
</dbReference>
<dbReference type="SMR" id="Q9JUK7"/>
<dbReference type="EnsemblBacteria" id="CAM08456">
    <property type="protein sequence ID" value="CAM08456"/>
    <property type="gene ID" value="NMA1268"/>
</dbReference>
<dbReference type="GeneID" id="93386127"/>
<dbReference type="KEGG" id="nma:NMA1268"/>
<dbReference type="HOGENOM" id="CLU_025400_2_0_4"/>
<dbReference type="UniPathway" id="UPA00098">
    <property type="reaction ID" value="UER00359"/>
</dbReference>
<dbReference type="Proteomes" id="UP000000626">
    <property type="component" value="Chromosome"/>
</dbReference>
<dbReference type="GO" id="GO:0005829">
    <property type="term" value="C:cytosol"/>
    <property type="evidence" value="ECO:0007669"/>
    <property type="project" value="TreeGrafter"/>
</dbReference>
<dbReference type="GO" id="GO:0005524">
    <property type="term" value="F:ATP binding"/>
    <property type="evidence" value="ECO:0007669"/>
    <property type="project" value="UniProtKB-KW"/>
</dbReference>
<dbReference type="GO" id="GO:0004349">
    <property type="term" value="F:glutamate 5-kinase activity"/>
    <property type="evidence" value="ECO:0007669"/>
    <property type="project" value="UniProtKB-UniRule"/>
</dbReference>
<dbReference type="GO" id="GO:0003723">
    <property type="term" value="F:RNA binding"/>
    <property type="evidence" value="ECO:0007669"/>
    <property type="project" value="InterPro"/>
</dbReference>
<dbReference type="GO" id="GO:0055129">
    <property type="term" value="P:L-proline biosynthetic process"/>
    <property type="evidence" value="ECO:0007669"/>
    <property type="project" value="UniProtKB-UniRule"/>
</dbReference>
<dbReference type="CDD" id="cd04242">
    <property type="entry name" value="AAK_G5K_ProB"/>
    <property type="match status" value="1"/>
</dbReference>
<dbReference type="CDD" id="cd21157">
    <property type="entry name" value="PUA_G5K"/>
    <property type="match status" value="1"/>
</dbReference>
<dbReference type="FunFam" id="3.40.1160.10:FF:000018">
    <property type="entry name" value="Glutamate 5-kinase"/>
    <property type="match status" value="1"/>
</dbReference>
<dbReference type="Gene3D" id="3.40.1160.10">
    <property type="entry name" value="Acetylglutamate kinase-like"/>
    <property type="match status" value="1"/>
</dbReference>
<dbReference type="Gene3D" id="2.30.130.10">
    <property type="entry name" value="PUA domain"/>
    <property type="match status" value="1"/>
</dbReference>
<dbReference type="HAMAP" id="MF_00456">
    <property type="entry name" value="ProB"/>
    <property type="match status" value="1"/>
</dbReference>
<dbReference type="InterPro" id="IPR036393">
    <property type="entry name" value="AceGlu_kinase-like_sf"/>
</dbReference>
<dbReference type="InterPro" id="IPR001048">
    <property type="entry name" value="Asp/Glu/Uridylate_kinase"/>
</dbReference>
<dbReference type="InterPro" id="IPR041739">
    <property type="entry name" value="G5K_ProB"/>
</dbReference>
<dbReference type="InterPro" id="IPR001057">
    <property type="entry name" value="Glu/AcGlu_kinase"/>
</dbReference>
<dbReference type="InterPro" id="IPR011529">
    <property type="entry name" value="Glu_5kinase"/>
</dbReference>
<dbReference type="InterPro" id="IPR005715">
    <property type="entry name" value="Glu_5kinase/COase_Synthase"/>
</dbReference>
<dbReference type="InterPro" id="IPR019797">
    <property type="entry name" value="Glutamate_5-kinase_CS"/>
</dbReference>
<dbReference type="InterPro" id="IPR002478">
    <property type="entry name" value="PUA"/>
</dbReference>
<dbReference type="InterPro" id="IPR015947">
    <property type="entry name" value="PUA-like_sf"/>
</dbReference>
<dbReference type="InterPro" id="IPR036974">
    <property type="entry name" value="PUA_sf"/>
</dbReference>
<dbReference type="NCBIfam" id="TIGR01027">
    <property type="entry name" value="proB"/>
    <property type="match status" value="1"/>
</dbReference>
<dbReference type="PANTHER" id="PTHR43654">
    <property type="entry name" value="GLUTAMATE 5-KINASE"/>
    <property type="match status" value="1"/>
</dbReference>
<dbReference type="PANTHER" id="PTHR43654:SF1">
    <property type="entry name" value="ISOPENTENYL PHOSPHATE KINASE"/>
    <property type="match status" value="1"/>
</dbReference>
<dbReference type="Pfam" id="PF00696">
    <property type="entry name" value="AA_kinase"/>
    <property type="match status" value="1"/>
</dbReference>
<dbReference type="Pfam" id="PF01472">
    <property type="entry name" value="PUA"/>
    <property type="match status" value="1"/>
</dbReference>
<dbReference type="PIRSF" id="PIRSF000729">
    <property type="entry name" value="GK"/>
    <property type="match status" value="1"/>
</dbReference>
<dbReference type="PRINTS" id="PR00474">
    <property type="entry name" value="GLU5KINASE"/>
</dbReference>
<dbReference type="SMART" id="SM00359">
    <property type="entry name" value="PUA"/>
    <property type="match status" value="1"/>
</dbReference>
<dbReference type="SUPFAM" id="SSF53633">
    <property type="entry name" value="Carbamate kinase-like"/>
    <property type="match status" value="1"/>
</dbReference>
<dbReference type="SUPFAM" id="SSF88697">
    <property type="entry name" value="PUA domain-like"/>
    <property type="match status" value="1"/>
</dbReference>
<dbReference type="PROSITE" id="PS00902">
    <property type="entry name" value="GLUTAMATE_5_KINASE"/>
    <property type="match status" value="1"/>
</dbReference>
<dbReference type="PROSITE" id="PS50890">
    <property type="entry name" value="PUA"/>
    <property type="match status" value="1"/>
</dbReference>
<feature type="chain" id="PRO_0000109697" description="Glutamate 5-kinase">
    <location>
        <begin position="1"/>
        <end position="369"/>
    </location>
</feature>
<feature type="domain" description="PUA" evidence="1">
    <location>
        <begin position="275"/>
        <end position="355"/>
    </location>
</feature>
<feature type="binding site" evidence="1">
    <location>
        <position position="9"/>
    </location>
    <ligand>
        <name>ATP</name>
        <dbReference type="ChEBI" id="CHEBI:30616"/>
    </ligand>
</feature>
<feature type="binding site" evidence="1">
    <location>
        <position position="49"/>
    </location>
    <ligand>
        <name>substrate</name>
    </ligand>
</feature>
<feature type="binding site" evidence="1">
    <location>
        <position position="136"/>
    </location>
    <ligand>
        <name>substrate</name>
    </ligand>
</feature>
<feature type="binding site" evidence="1">
    <location>
        <position position="148"/>
    </location>
    <ligand>
        <name>substrate</name>
    </ligand>
</feature>
<feature type="binding site" evidence="1">
    <location>
        <begin position="168"/>
        <end position="169"/>
    </location>
    <ligand>
        <name>ATP</name>
        <dbReference type="ChEBI" id="CHEBI:30616"/>
    </ligand>
</feature>
<feature type="binding site" evidence="1">
    <location>
        <begin position="210"/>
        <end position="216"/>
    </location>
    <ligand>
        <name>ATP</name>
        <dbReference type="ChEBI" id="CHEBI:30616"/>
    </ligand>
</feature>
<keyword id="KW-0028">Amino-acid biosynthesis</keyword>
<keyword id="KW-0067">ATP-binding</keyword>
<keyword id="KW-0963">Cytoplasm</keyword>
<keyword id="KW-0418">Kinase</keyword>
<keyword id="KW-0547">Nucleotide-binding</keyword>
<keyword id="KW-0641">Proline biosynthesis</keyword>
<keyword id="KW-0808">Transferase</keyword>
<gene>
    <name evidence="1" type="primary">proB</name>
    <name type="ordered locus">NMA1268</name>
</gene>
<accession>Q9JUK7</accession>
<accession>A1IRR2</accession>
<protein>
    <recommendedName>
        <fullName evidence="1">Glutamate 5-kinase</fullName>
        <ecNumber evidence="1">2.7.2.11</ecNumber>
    </recommendedName>
    <alternativeName>
        <fullName evidence="1">Gamma-glutamyl kinase</fullName>
        <shortName evidence="1">GK</shortName>
    </alternativeName>
</protein>
<sequence>MKYKRIVFKVGTSSITHSDGSLSRGKIQTITRQLAALHHAGHELVLVSSGAVAAGFGALGFKKRPVKIADKQASAAVGQGLLMEEYTANLSSDGIVSAQILLSRADFADKRRYQNAGGALSVLLQRRAVPIINENDTVSVEELKIGDNDTLSAQVAAMIQADLLVLLTDIDGLYTGNPNSNPDAVRLDKIEHINHEIIEMAGGSGSANGTGGMLTKIKAATIATESGVPVYICSSLKPDALAEAADNQADGSFFVPRAKGLRTQKQWLAFYSESRGGVYVDEGAEHALSEQGKSLLMSGIAGIEGHFSRMDTVTVYSKATKQPLGKGRVLFGSAAAEDLLKLRKAKGVFIHRDDWISITPEIRLLLTEF</sequence>
<evidence type="ECO:0000255" key="1">
    <source>
        <dbReference type="HAMAP-Rule" id="MF_00456"/>
    </source>
</evidence>
<organism>
    <name type="scientific">Neisseria meningitidis serogroup A / serotype 4A (strain DSM 15465 / Z2491)</name>
    <dbReference type="NCBI Taxonomy" id="122587"/>
    <lineage>
        <taxon>Bacteria</taxon>
        <taxon>Pseudomonadati</taxon>
        <taxon>Pseudomonadota</taxon>
        <taxon>Betaproteobacteria</taxon>
        <taxon>Neisseriales</taxon>
        <taxon>Neisseriaceae</taxon>
        <taxon>Neisseria</taxon>
    </lineage>
</organism>